<evidence type="ECO:0000250" key="1"/>
<evidence type="ECO:0000250" key="2">
    <source>
        <dbReference type="UniProtKB" id="Q8R400"/>
    </source>
</evidence>
<evidence type="ECO:0000255" key="3"/>
<evidence type="ECO:0000305" key="4"/>
<evidence type="ECO:0000312" key="5">
    <source>
        <dbReference type="EMBL" id="AAI19706.1"/>
    </source>
</evidence>
<dbReference type="EMBL" id="AL035419">
    <property type="status" value="NOT_ANNOTATED_CDS"/>
    <property type="molecule type" value="Genomic_DNA"/>
</dbReference>
<dbReference type="EMBL" id="BC119704">
    <property type="protein sequence ID" value="AAI19705.1"/>
    <property type="molecule type" value="mRNA"/>
</dbReference>
<dbReference type="EMBL" id="BC119705">
    <property type="protein sequence ID" value="AAI19706.1"/>
    <property type="molecule type" value="mRNA"/>
</dbReference>
<dbReference type="CCDS" id="CCDS54461.1"/>
<dbReference type="RefSeq" id="NP_001018092.1">
    <property type="nucleotide sequence ID" value="NM_001018082.2"/>
</dbReference>
<dbReference type="RefSeq" id="NP_001380745.1">
    <property type="nucleotide sequence ID" value="NM_001393816.1"/>
</dbReference>
<dbReference type="SMR" id="Q0VDE8"/>
<dbReference type="FunCoup" id="Q0VDE8">
    <property type="interactions" value="34"/>
</dbReference>
<dbReference type="STRING" id="9606.ENSP00000440331"/>
<dbReference type="TCDB" id="9.B.434.1.1">
    <property type="family name" value="the adipogenin (adig) family"/>
</dbReference>
<dbReference type="PhosphoSitePlus" id="Q0VDE8"/>
<dbReference type="BioMuta" id="ADIG"/>
<dbReference type="DMDM" id="156630981"/>
<dbReference type="MassIVE" id="Q0VDE8"/>
<dbReference type="PaxDb" id="9606-ENSP00000440331"/>
<dbReference type="PeptideAtlas" id="Q0VDE8"/>
<dbReference type="ProteomicsDB" id="58824"/>
<dbReference type="Antibodypedia" id="51583">
    <property type="antibodies" value="12 antibodies from 8 providers"/>
</dbReference>
<dbReference type="DNASU" id="149685"/>
<dbReference type="Ensembl" id="ENST00000470147.5">
    <property type="protein sequence ID" value="ENSP00000434385.1"/>
    <property type="gene ID" value="ENSG00000182035.13"/>
</dbReference>
<dbReference type="Ensembl" id="ENST00000537425.3">
    <property type="protein sequence ID" value="ENSP00000440331.2"/>
    <property type="gene ID" value="ENSG00000182035.13"/>
</dbReference>
<dbReference type="GeneID" id="149685"/>
<dbReference type="MANE-Select" id="ENST00000537425.3">
    <property type="protein sequence ID" value="ENSP00000440331.2"/>
    <property type="RefSeq nucleotide sequence ID" value="NM_001393816.1"/>
    <property type="RefSeq protein sequence ID" value="NP_001380745.1"/>
</dbReference>
<dbReference type="UCSC" id="uc002xjb.1">
    <property type="organism name" value="human"/>
</dbReference>
<dbReference type="AGR" id="HGNC:28606"/>
<dbReference type="DisGeNET" id="149685"/>
<dbReference type="GeneCards" id="ADIG"/>
<dbReference type="HGNC" id="HGNC:28606">
    <property type="gene designation" value="ADIG"/>
</dbReference>
<dbReference type="HPA" id="ENSG00000182035">
    <property type="expression patterns" value="Tissue enriched (testis)"/>
</dbReference>
<dbReference type="MIM" id="611396">
    <property type="type" value="gene"/>
</dbReference>
<dbReference type="neXtProt" id="NX_Q0VDE8"/>
<dbReference type="OpenTargets" id="ENSG00000182035"/>
<dbReference type="PharmGKB" id="PA162375689"/>
<dbReference type="VEuPathDB" id="HostDB:ENSG00000182035"/>
<dbReference type="eggNOG" id="ENOG502SXJP">
    <property type="taxonomic scope" value="Eukaryota"/>
</dbReference>
<dbReference type="GeneTree" id="ENSGT00390000018723"/>
<dbReference type="HOGENOM" id="CLU_2605436_0_0_1"/>
<dbReference type="InParanoid" id="Q0VDE8"/>
<dbReference type="OMA" id="QGPAEFC"/>
<dbReference type="OrthoDB" id="9426851at2759"/>
<dbReference type="PAN-GO" id="Q0VDE8">
    <property type="GO annotations" value="5 GO annotations based on evolutionary models"/>
</dbReference>
<dbReference type="PhylomeDB" id="Q0VDE8"/>
<dbReference type="PathwayCommons" id="Q0VDE8"/>
<dbReference type="SignaLink" id="Q0VDE8"/>
<dbReference type="BioGRID-ORCS" id="149685">
    <property type="hits" value="12 hits in 1141 CRISPR screens"/>
</dbReference>
<dbReference type="GenomeRNAi" id="149685"/>
<dbReference type="Pharos" id="Q0VDE8">
    <property type="development level" value="Tdark"/>
</dbReference>
<dbReference type="PRO" id="PR:Q0VDE8"/>
<dbReference type="Proteomes" id="UP000005640">
    <property type="component" value="Chromosome 20"/>
</dbReference>
<dbReference type="RNAct" id="Q0VDE8">
    <property type="molecule type" value="protein"/>
</dbReference>
<dbReference type="Bgee" id="ENSG00000182035">
    <property type="expression patterns" value="Expressed in male germ line stem cell (sensu Vertebrata) in testis and 68 other cell types or tissues"/>
</dbReference>
<dbReference type="ExpressionAtlas" id="Q0VDE8">
    <property type="expression patterns" value="baseline and differential"/>
</dbReference>
<dbReference type="GO" id="GO:0005737">
    <property type="term" value="C:cytoplasm"/>
    <property type="evidence" value="ECO:0000250"/>
    <property type="project" value="HGNC-UCL"/>
</dbReference>
<dbReference type="GO" id="GO:0005811">
    <property type="term" value="C:lipid droplet"/>
    <property type="evidence" value="ECO:0000318"/>
    <property type="project" value="GO_Central"/>
</dbReference>
<dbReference type="GO" id="GO:0016020">
    <property type="term" value="C:membrane"/>
    <property type="evidence" value="ECO:0007669"/>
    <property type="project" value="UniProtKB-SubCell"/>
</dbReference>
<dbReference type="GO" id="GO:0005634">
    <property type="term" value="C:nucleus"/>
    <property type="evidence" value="ECO:0000250"/>
    <property type="project" value="HGNC-UCL"/>
</dbReference>
<dbReference type="GO" id="GO:0050873">
    <property type="term" value="P:brown fat cell differentiation"/>
    <property type="evidence" value="ECO:0000250"/>
    <property type="project" value="HGNC-UCL"/>
</dbReference>
<dbReference type="GO" id="GO:0045600">
    <property type="term" value="P:positive regulation of fat cell differentiation"/>
    <property type="evidence" value="ECO:0000250"/>
    <property type="project" value="HGNC-UCL"/>
</dbReference>
<dbReference type="GO" id="GO:0007283">
    <property type="term" value="P:spermatogenesis"/>
    <property type="evidence" value="ECO:0007669"/>
    <property type="project" value="Ensembl"/>
</dbReference>
<dbReference type="GO" id="GO:0050872">
    <property type="term" value="P:white fat cell differentiation"/>
    <property type="evidence" value="ECO:0000318"/>
    <property type="project" value="GO_Central"/>
</dbReference>
<dbReference type="InterPro" id="IPR027938">
    <property type="entry name" value="Adipogenin"/>
</dbReference>
<dbReference type="PANTHER" id="PTHR38499">
    <property type="entry name" value="ADIPOGENIN"/>
    <property type="match status" value="1"/>
</dbReference>
<dbReference type="PANTHER" id="PTHR38499:SF1">
    <property type="entry name" value="ADIPOGENIN"/>
    <property type="match status" value="1"/>
</dbReference>
<dbReference type="Pfam" id="PF15202">
    <property type="entry name" value="Adipogenin"/>
    <property type="match status" value="1"/>
</dbReference>
<name>ADIG_HUMAN</name>
<reference key="1">
    <citation type="journal article" date="2001" name="Nature">
        <title>The DNA sequence and comparative analysis of human chromosome 20.</title>
        <authorList>
            <person name="Deloukas P."/>
            <person name="Matthews L.H."/>
            <person name="Ashurst J.L."/>
            <person name="Burton J."/>
            <person name="Gilbert J.G.R."/>
            <person name="Jones M."/>
            <person name="Stavrides G."/>
            <person name="Almeida J.P."/>
            <person name="Babbage A.K."/>
            <person name="Bagguley C.L."/>
            <person name="Bailey J."/>
            <person name="Barlow K.F."/>
            <person name="Bates K.N."/>
            <person name="Beard L.M."/>
            <person name="Beare D.M."/>
            <person name="Beasley O.P."/>
            <person name="Bird C.P."/>
            <person name="Blakey S.E."/>
            <person name="Bridgeman A.M."/>
            <person name="Brown A.J."/>
            <person name="Buck D."/>
            <person name="Burrill W.D."/>
            <person name="Butler A.P."/>
            <person name="Carder C."/>
            <person name="Carter N.P."/>
            <person name="Chapman J.C."/>
            <person name="Clamp M."/>
            <person name="Clark G."/>
            <person name="Clark L.N."/>
            <person name="Clark S.Y."/>
            <person name="Clee C.M."/>
            <person name="Clegg S."/>
            <person name="Cobley V.E."/>
            <person name="Collier R.E."/>
            <person name="Connor R.E."/>
            <person name="Corby N.R."/>
            <person name="Coulson A."/>
            <person name="Coville G.J."/>
            <person name="Deadman R."/>
            <person name="Dhami P.D."/>
            <person name="Dunn M."/>
            <person name="Ellington A.G."/>
            <person name="Frankland J.A."/>
            <person name="Fraser A."/>
            <person name="French L."/>
            <person name="Garner P."/>
            <person name="Grafham D.V."/>
            <person name="Griffiths C."/>
            <person name="Griffiths M.N.D."/>
            <person name="Gwilliam R."/>
            <person name="Hall R.E."/>
            <person name="Hammond S."/>
            <person name="Harley J.L."/>
            <person name="Heath P.D."/>
            <person name="Ho S."/>
            <person name="Holden J.L."/>
            <person name="Howden P.J."/>
            <person name="Huckle E."/>
            <person name="Hunt A.R."/>
            <person name="Hunt S.E."/>
            <person name="Jekosch K."/>
            <person name="Johnson C.M."/>
            <person name="Johnson D."/>
            <person name="Kay M.P."/>
            <person name="Kimberley A.M."/>
            <person name="King A."/>
            <person name="Knights A."/>
            <person name="Laird G.K."/>
            <person name="Lawlor S."/>
            <person name="Lehvaeslaiho M.H."/>
            <person name="Leversha M.A."/>
            <person name="Lloyd C."/>
            <person name="Lloyd D.M."/>
            <person name="Lovell J.D."/>
            <person name="Marsh V.L."/>
            <person name="Martin S.L."/>
            <person name="McConnachie L.J."/>
            <person name="McLay K."/>
            <person name="McMurray A.A."/>
            <person name="Milne S.A."/>
            <person name="Mistry D."/>
            <person name="Moore M.J.F."/>
            <person name="Mullikin J.C."/>
            <person name="Nickerson T."/>
            <person name="Oliver K."/>
            <person name="Parker A."/>
            <person name="Patel R."/>
            <person name="Pearce T.A.V."/>
            <person name="Peck A.I."/>
            <person name="Phillimore B.J.C.T."/>
            <person name="Prathalingam S.R."/>
            <person name="Plumb R.W."/>
            <person name="Ramsay H."/>
            <person name="Rice C.M."/>
            <person name="Ross M.T."/>
            <person name="Scott C.E."/>
            <person name="Sehra H.K."/>
            <person name="Shownkeen R."/>
            <person name="Sims S."/>
            <person name="Skuce C.D."/>
            <person name="Smith M.L."/>
            <person name="Soderlund C."/>
            <person name="Steward C.A."/>
            <person name="Sulston J.E."/>
            <person name="Swann R.M."/>
            <person name="Sycamore N."/>
            <person name="Taylor R."/>
            <person name="Tee L."/>
            <person name="Thomas D.W."/>
            <person name="Thorpe A."/>
            <person name="Tracey A."/>
            <person name="Tromans A.C."/>
            <person name="Vaudin M."/>
            <person name="Wall M."/>
            <person name="Wallis J.M."/>
            <person name="Whitehead S.L."/>
            <person name="Whittaker P."/>
            <person name="Willey D.L."/>
            <person name="Williams L."/>
            <person name="Williams S.A."/>
            <person name="Wilming L."/>
            <person name="Wray P.W."/>
            <person name="Hubbard T."/>
            <person name="Durbin R.M."/>
            <person name="Bentley D.R."/>
            <person name="Beck S."/>
            <person name="Rogers J."/>
        </authorList>
    </citation>
    <scope>NUCLEOTIDE SEQUENCE [LARGE SCALE GENOMIC DNA]</scope>
</reference>
<reference evidence="5" key="2">
    <citation type="journal article" date="2004" name="Genome Res.">
        <title>The status, quality, and expansion of the NIH full-length cDNA project: the Mammalian Gene Collection (MGC).</title>
        <authorList>
            <consortium name="The MGC Project Team"/>
        </authorList>
    </citation>
    <scope>NUCLEOTIDE SEQUENCE [LARGE SCALE MRNA]</scope>
</reference>
<gene>
    <name evidence="5" type="primary">ADIG</name>
</gene>
<keyword id="KW-0472">Membrane</keyword>
<keyword id="KW-0539">Nucleus</keyword>
<keyword id="KW-1185">Reference proteome</keyword>
<keyword id="KW-0812">Transmembrane</keyword>
<keyword id="KW-1133">Transmembrane helix</keyword>
<accession>Q0VDE8</accession>
<organism>
    <name type="scientific">Homo sapiens</name>
    <name type="common">Human</name>
    <dbReference type="NCBI Taxonomy" id="9606"/>
    <lineage>
        <taxon>Eukaryota</taxon>
        <taxon>Metazoa</taxon>
        <taxon>Chordata</taxon>
        <taxon>Craniata</taxon>
        <taxon>Vertebrata</taxon>
        <taxon>Euteleostomi</taxon>
        <taxon>Mammalia</taxon>
        <taxon>Eutheria</taxon>
        <taxon>Euarchontoglires</taxon>
        <taxon>Primates</taxon>
        <taxon>Haplorrhini</taxon>
        <taxon>Catarrhini</taxon>
        <taxon>Hominidae</taxon>
        <taxon>Homo</taxon>
    </lineage>
</organism>
<sequence length="80" mass="9465">MKYPLMPLVNDLTFSFLVFWFCLPVGLLLLLIIWLRFLLSQDSEENDSSVCLDWEPWSKGPAEFCWKGTLHGQEKERPCW</sequence>
<comment type="function">
    <text evidence="2">Plays a role in stimulating adipocyte differentiation and development.</text>
</comment>
<comment type="subcellular location">
    <subcellularLocation>
        <location evidence="3">Membrane</location>
        <topology evidence="3">Single-pass membrane protein</topology>
    </subcellularLocation>
    <subcellularLocation>
        <location evidence="1">Nucleus</location>
    </subcellularLocation>
</comment>
<comment type="similarity">
    <text evidence="4">Belongs to the adipogenin family.</text>
</comment>
<feature type="chain" id="PRO_0000296375" description="Adipogenin">
    <location>
        <begin position="1"/>
        <end position="80"/>
    </location>
</feature>
<feature type="transmembrane region" description="Helical" evidence="3">
    <location>
        <begin position="14"/>
        <end position="34"/>
    </location>
</feature>
<protein>
    <recommendedName>
        <fullName>Adipogenin</fullName>
    </recommendedName>
</protein>
<proteinExistence type="inferred from homology"/>